<gene>
    <name type="primary">yxjH</name>
    <name type="ordered locus">BSU38950</name>
    <name type="ORF">N15OR</name>
</gene>
<protein>
    <recommendedName>
        <fullName>Uncharacterized protein YxjH</fullName>
    </recommendedName>
</protein>
<accession>P42319</accession>
<feature type="chain" id="PRO_0000050036" description="Uncharacterized protein YxjH">
    <location>
        <begin position="1"/>
        <end position="377"/>
    </location>
</feature>
<feature type="region of interest" description="Disordered" evidence="1">
    <location>
        <begin position="1"/>
        <end position="25"/>
    </location>
</feature>
<feature type="compositionally biased region" description="Basic and acidic residues" evidence="1">
    <location>
        <begin position="11"/>
        <end position="24"/>
    </location>
</feature>
<comment type="similarity">
    <text evidence="2">To B.subtilis YxjG.</text>
</comment>
<comment type="sequence caution" evidence="2">
    <conflict type="frameshift">
        <sequence resource="EMBL-CDS" id="BAA11709"/>
    </conflict>
</comment>
<evidence type="ECO:0000256" key="1">
    <source>
        <dbReference type="SAM" id="MobiDB-lite"/>
    </source>
</evidence>
<evidence type="ECO:0000305" key="2"/>
<reference key="1">
    <citation type="journal article" date="1996" name="Microbiology">
        <title>Sequencing of a 65 kb region of the Bacillus subtilis genome containing the lic and cel loci, and creation of a 177 kb contig covering the gnt-sacXY region.</title>
        <authorList>
            <person name="Yoshida K."/>
            <person name="Shindo K."/>
            <person name="Sano H."/>
            <person name="Seki S."/>
            <person name="Fujimura M."/>
            <person name="Yanai N."/>
            <person name="Miwa Y."/>
            <person name="Fujita Y."/>
        </authorList>
    </citation>
    <scope>NUCLEOTIDE SEQUENCE [GENOMIC DNA]</scope>
    <source>
        <strain>168 / BGSC1A1</strain>
    </source>
</reference>
<reference key="2">
    <citation type="journal article" date="1997" name="Nature">
        <title>The complete genome sequence of the Gram-positive bacterium Bacillus subtilis.</title>
        <authorList>
            <person name="Kunst F."/>
            <person name="Ogasawara N."/>
            <person name="Moszer I."/>
            <person name="Albertini A.M."/>
            <person name="Alloni G."/>
            <person name="Azevedo V."/>
            <person name="Bertero M.G."/>
            <person name="Bessieres P."/>
            <person name="Bolotin A."/>
            <person name="Borchert S."/>
            <person name="Borriss R."/>
            <person name="Boursier L."/>
            <person name="Brans A."/>
            <person name="Braun M."/>
            <person name="Brignell S.C."/>
            <person name="Bron S."/>
            <person name="Brouillet S."/>
            <person name="Bruschi C.V."/>
            <person name="Caldwell B."/>
            <person name="Capuano V."/>
            <person name="Carter N.M."/>
            <person name="Choi S.-K."/>
            <person name="Codani J.-J."/>
            <person name="Connerton I.F."/>
            <person name="Cummings N.J."/>
            <person name="Daniel R.A."/>
            <person name="Denizot F."/>
            <person name="Devine K.M."/>
            <person name="Duesterhoeft A."/>
            <person name="Ehrlich S.D."/>
            <person name="Emmerson P.T."/>
            <person name="Entian K.-D."/>
            <person name="Errington J."/>
            <person name="Fabret C."/>
            <person name="Ferrari E."/>
            <person name="Foulger D."/>
            <person name="Fritz C."/>
            <person name="Fujita M."/>
            <person name="Fujita Y."/>
            <person name="Fuma S."/>
            <person name="Galizzi A."/>
            <person name="Galleron N."/>
            <person name="Ghim S.-Y."/>
            <person name="Glaser P."/>
            <person name="Goffeau A."/>
            <person name="Golightly E.J."/>
            <person name="Grandi G."/>
            <person name="Guiseppi G."/>
            <person name="Guy B.J."/>
            <person name="Haga K."/>
            <person name="Haiech J."/>
            <person name="Harwood C.R."/>
            <person name="Henaut A."/>
            <person name="Hilbert H."/>
            <person name="Holsappel S."/>
            <person name="Hosono S."/>
            <person name="Hullo M.-F."/>
            <person name="Itaya M."/>
            <person name="Jones L.-M."/>
            <person name="Joris B."/>
            <person name="Karamata D."/>
            <person name="Kasahara Y."/>
            <person name="Klaerr-Blanchard M."/>
            <person name="Klein C."/>
            <person name="Kobayashi Y."/>
            <person name="Koetter P."/>
            <person name="Koningstein G."/>
            <person name="Krogh S."/>
            <person name="Kumano M."/>
            <person name="Kurita K."/>
            <person name="Lapidus A."/>
            <person name="Lardinois S."/>
            <person name="Lauber J."/>
            <person name="Lazarevic V."/>
            <person name="Lee S.-M."/>
            <person name="Levine A."/>
            <person name="Liu H."/>
            <person name="Masuda S."/>
            <person name="Mauel C."/>
            <person name="Medigue C."/>
            <person name="Medina N."/>
            <person name="Mellado R.P."/>
            <person name="Mizuno M."/>
            <person name="Moestl D."/>
            <person name="Nakai S."/>
            <person name="Noback M."/>
            <person name="Noone D."/>
            <person name="O'Reilly M."/>
            <person name="Ogawa K."/>
            <person name="Ogiwara A."/>
            <person name="Oudega B."/>
            <person name="Park S.-H."/>
            <person name="Parro V."/>
            <person name="Pohl T.M."/>
            <person name="Portetelle D."/>
            <person name="Porwollik S."/>
            <person name="Prescott A.M."/>
            <person name="Presecan E."/>
            <person name="Pujic P."/>
            <person name="Purnelle B."/>
            <person name="Rapoport G."/>
            <person name="Rey M."/>
            <person name="Reynolds S."/>
            <person name="Rieger M."/>
            <person name="Rivolta C."/>
            <person name="Rocha E."/>
            <person name="Roche B."/>
            <person name="Rose M."/>
            <person name="Sadaie Y."/>
            <person name="Sato T."/>
            <person name="Scanlan E."/>
            <person name="Schleich S."/>
            <person name="Schroeter R."/>
            <person name="Scoffone F."/>
            <person name="Sekiguchi J."/>
            <person name="Sekowska A."/>
            <person name="Seror S.J."/>
            <person name="Serror P."/>
            <person name="Shin B.-S."/>
            <person name="Soldo B."/>
            <person name="Sorokin A."/>
            <person name="Tacconi E."/>
            <person name="Takagi T."/>
            <person name="Takahashi H."/>
            <person name="Takemaru K."/>
            <person name="Takeuchi M."/>
            <person name="Tamakoshi A."/>
            <person name="Tanaka T."/>
            <person name="Terpstra P."/>
            <person name="Tognoni A."/>
            <person name="Tosato V."/>
            <person name="Uchiyama S."/>
            <person name="Vandenbol M."/>
            <person name="Vannier F."/>
            <person name="Vassarotti A."/>
            <person name="Viari A."/>
            <person name="Wambutt R."/>
            <person name="Wedler E."/>
            <person name="Wedler H."/>
            <person name="Weitzenegger T."/>
            <person name="Winters P."/>
            <person name="Wipat A."/>
            <person name="Yamamoto H."/>
            <person name="Yamane K."/>
            <person name="Yasumoto K."/>
            <person name="Yata K."/>
            <person name="Yoshida K."/>
            <person name="Yoshikawa H.-F."/>
            <person name="Zumstein E."/>
            <person name="Yoshikawa H."/>
            <person name="Danchin A."/>
        </authorList>
    </citation>
    <scope>NUCLEOTIDE SEQUENCE [LARGE SCALE GENOMIC DNA]</scope>
    <source>
        <strain>168</strain>
    </source>
</reference>
<reference key="3">
    <citation type="journal article" date="2009" name="Microbiology">
        <title>From a consortium sequence to a unified sequence: the Bacillus subtilis 168 reference genome a decade later.</title>
        <authorList>
            <person name="Barbe V."/>
            <person name="Cruveiller S."/>
            <person name="Kunst F."/>
            <person name="Lenoble P."/>
            <person name="Meurice G."/>
            <person name="Sekowska A."/>
            <person name="Vallenet D."/>
            <person name="Wang T."/>
            <person name="Moszer I."/>
            <person name="Medigue C."/>
            <person name="Danchin A."/>
        </authorList>
    </citation>
    <scope>SEQUENCE REVISION TO C-TERMINUS</scope>
</reference>
<organism>
    <name type="scientific">Bacillus subtilis (strain 168)</name>
    <dbReference type="NCBI Taxonomy" id="224308"/>
    <lineage>
        <taxon>Bacteria</taxon>
        <taxon>Bacillati</taxon>
        <taxon>Bacillota</taxon>
        <taxon>Bacilli</taxon>
        <taxon>Bacillales</taxon>
        <taxon>Bacillaceae</taxon>
        <taxon>Bacillus</taxon>
    </lineage>
</organism>
<sequence length="377" mass="42674">MAQQTNVAGQKTEKQRKAPFRADHVGSLLRSVPVKEARQKKAAGEMTAEQLRDIENQEITRIVEKQKEIGLDVVTDGEFRRSWWHYDFLEGLDGVEPFIPAEGIQFHNTKTKARSIKVTGKLDFTSHPALGDYQFLHEIAGNATPKLTIPSPNMLFFGEKADKGIYDDQEEYFHDMAQAYKKAIKAFYDAGCRYLQLDDTSWSLFFEDKGREVVRALGGDPETLPAIFAKTINDAVADRPDDLTITMHICRGNFRSTWAASGGYDAVAETILDGLNLDGLFLEYDDDRSGNFDPLRFVKRKDLQIVLGLITSKYGELENPEDVKRRINEAARFVSLDQLCLSPQCGFASTEEGNLLTEEQQWAKLRHVIDIANDVWR</sequence>
<keyword id="KW-1185">Reference proteome</keyword>
<dbReference type="EMBL" id="D83026">
    <property type="protein sequence ID" value="BAA11709.1"/>
    <property type="status" value="ALT_FRAME"/>
    <property type="molecule type" value="Genomic_DNA"/>
</dbReference>
<dbReference type="EMBL" id="AL009126">
    <property type="protein sequence ID" value="CAB15921.2"/>
    <property type="molecule type" value="Genomic_DNA"/>
</dbReference>
<dbReference type="PIR" id="F70079">
    <property type="entry name" value="F70079"/>
</dbReference>
<dbReference type="RefSeq" id="NP_391774.2">
    <property type="nucleotide sequence ID" value="NC_000964.3"/>
</dbReference>
<dbReference type="RefSeq" id="WP_003244296.1">
    <property type="nucleotide sequence ID" value="NZ_OZ025638.1"/>
</dbReference>
<dbReference type="SMR" id="P42319"/>
<dbReference type="FunCoup" id="P42319">
    <property type="interactions" value="30"/>
</dbReference>
<dbReference type="IntAct" id="P42319">
    <property type="interactions" value="1"/>
</dbReference>
<dbReference type="MINT" id="P42319"/>
<dbReference type="STRING" id="224308.BSU38950"/>
<dbReference type="PaxDb" id="224308-BSU38950"/>
<dbReference type="EnsemblBacteria" id="CAB15921">
    <property type="protein sequence ID" value="CAB15921"/>
    <property type="gene ID" value="BSU_38950"/>
</dbReference>
<dbReference type="GeneID" id="937440"/>
<dbReference type="KEGG" id="bsu:BSU38950"/>
<dbReference type="PATRIC" id="fig|224308.179.peg.4215"/>
<dbReference type="eggNOG" id="COG0620">
    <property type="taxonomic scope" value="Bacteria"/>
</dbReference>
<dbReference type="InParanoid" id="P42319"/>
<dbReference type="OrthoDB" id="6430685at2"/>
<dbReference type="PhylomeDB" id="P42319"/>
<dbReference type="BioCyc" id="BSUB:BSU38950-MONOMER"/>
<dbReference type="Proteomes" id="UP000001570">
    <property type="component" value="Chromosome"/>
</dbReference>
<dbReference type="GO" id="GO:0003871">
    <property type="term" value="F:5-methyltetrahydropteroyltriglutamate-homocysteine S-methyltransferase activity"/>
    <property type="evidence" value="ECO:0007669"/>
    <property type="project" value="InterPro"/>
</dbReference>
<dbReference type="GO" id="GO:0008270">
    <property type="term" value="F:zinc ion binding"/>
    <property type="evidence" value="ECO:0007669"/>
    <property type="project" value="InterPro"/>
</dbReference>
<dbReference type="GO" id="GO:0009086">
    <property type="term" value="P:methionine biosynthetic process"/>
    <property type="evidence" value="ECO:0007669"/>
    <property type="project" value="InterPro"/>
</dbReference>
<dbReference type="CDD" id="cd03311">
    <property type="entry name" value="CIMS_C_terminal_like"/>
    <property type="match status" value="1"/>
</dbReference>
<dbReference type="Gene3D" id="3.20.20.210">
    <property type="match status" value="1"/>
</dbReference>
<dbReference type="InterPro" id="IPR002629">
    <property type="entry name" value="Met_Synth_C/arc"/>
</dbReference>
<dbReference type="InterPro" id="IPR038071">
    <property type="entry name" value="UROD/MetE-like_sf"/>
</dbReference>
<dbReference type="NCBIfam" id="NF005085">
    <property type="entry name" value="PRK06520.1"/>
    <property type="match status" value="1"/>
</dbReference>
<dbReference type="PANTHER" id="PTHR43844">
    <property type="entry name" value="METHIONINE SYNTHASE"/>
    <property type="match status" value="1"/>
</dbReference>
<dbReference type="PANTHER" id="PTHR43844:SF1">
    <property type="entry name" value="METHIONINE SYNTHASE"/>
    <property type="match status" value="1"/>
</dbReference>
<dbReference type="Pfam" id="PF01717">
    <property type="entry name" value="Meth_synt_2"/>
    <property type="match status" value="1"/>
</dbReference>
<dbReference type="SUPFAM" id="SSF51726">
    <property type="entry name" value="UROD/MetE-like"/>
    <property type="match status" value="1"/>
</dbReference>
<name>YXJH_BACSU</name>
<proteinExistence type="predicted"/>